<protein>
    <recommendedName>
        <fullName evidence="1">Probable DNA ligase</fullName>
        <ecNumber evidence="1">6.5.1.1</ecNumber>
    </recommendedName>
    <alternativeName>
        <fullName evidence="1">Polydeoxyribonucleotide synthase [ATP]</fullName>
    </alternativeName>
</protein>
<reference key="1">
    <citation type="journal article" date="2002" name="Nature">
        <title>Complete genome sequence of the model actinomycete Streptomyces coelicolor A3(2).</title>
        <authorList>
            <person name="Bentley S.D."/>
            <person name="Chater K.F."/>
            <person name="Cerdeno-Tarraga A.-M."/>
            <person name="Challis G.L."/>
            <person name="Thomson N.R."/>
            <person name="James K.D."/>
            <person name="Harris D.E."/>
            <person name="Quail M.A."/>
            <person name="Kieser H."/>
            <person name="Harper D."/>
            <person name="Bateman A."/>
            <person name="Brown S."/>
            <person name="Chandra G."/>
            <person name="Chen C.W."/>
            <person name="Collins M."/>
            <person name="Cronin A."/>
            <person name="Fraser A."/>
            <person name="Goble A."/>
            <person name="Hidalgo J."/>
            <person name="Hornsby T."/>
            <person name="Howarth S."/>
            <person name="Huang C.-H."/>
            <person name="Kieser T."/>
            <person name="Larke L."/>
            <person name="Murphy L.D."/>
            <person name="Oliver K."/>
            <person name="O'Neil S."/>
            <person name="Rabbinowitsch E."/>
            <person name="Rajandream M.A."/>
            <person name="Rutherford K.M."/>
            <person name="Rutter S."/>
            <person name="Seeger K."/>
            <person name="Saunders D."/>
            <person name="Sharp S."/>
            <person name="Squares R."/>
            <person name="Squares S."/>
            <person name="Taylor K."/>
            <person name="Warren T."/>
            <person name="Wietzorrek A."/>
            <person name="Woodward J.R."/>
            <person name="Barrell B.G."/>
            <person name="Parkhill J."/>
            <person name="Hopwood D.A."/>
        </authorList>
    </citation>
    <scope>NUCLEOTIDE SEQUENCE [LARGE SCALE GENOMIC DNA]</scope>
    <source>
        <strain>ATCC BAA-471 / A3(2) / M145</strain>
    </source>
</reference>
<gene>
    <name evidence="1" type="primary">lig</name>
    <name type="ordered locus">SCO1202</name>
    <name type="ORF">2SCG58.02</name>
</gene>
<feature type="chain" id="PRO_0000059624" description="Probable DNA ligase">
    <location>
        <begin position="1"/>
        <end position="512"/>
    </location>
</feature>
<feature type="active site" description="N6-AMP-lysine intermediate" evidence="1">
    <location>
        <position position="210"/>
    </location>
</feature>
<feature type="binding site" evidence="1">
    <location>
        <position position="208"/>
    </location>
    <ligand>
        <name>ATP</name>
        <dbReference type="ChEBI" id="CHEBI:30616"/>
    </ligand>
</feature>
<feature type="binding site" evidence="1">
    <location>
        <position position="215"/>
    </location>
    <ligand>
        <name>ATP</name>
        <dbReference type="ChEBI" id="CHEBI:30616"/>
    </ligand>
</feature>
<feature type="binding site" evidence="1">
    <location>
        <position position="230"/>
    </location>
    <ligand>
        <name>ATP</name>
        <dbReference type="ChEBI" id="CHEBI:30616"/>
    </ligand>
</feature>
<feature type="binding site" evidence="1">
    <location>
        <position position="259"/>
    </location>
    <ligand>
        <name>ATP</name>
        <dbReference type="ChEBI" id="CHEBI:30616"/>
    </ligand>
</feature>
<feature type="binding site" evidence="1">
    <location>
        <position position="299"/>
    </location>
    <ligand>
        <name>ATP</name>
        <dbReference type="ChEBI" id="CHEBI:30616"/>
    </ligand>
</feature>
<feature type="binding site" evidence="1">
    <location>
        <position position="374"/>
    </location>
    <ligand>
        <name>ATP</name>
        <dbReference type="ChEBI" id="CHEBI:30616"/>
    </ligand>
</feature>
<feature type="binding site" evidence="1">
    <location>
        <position position="380"/>
    </location>
    <ligand>
        <name>ATP</name>
        <dbReference type="ChEBI" id="CHEBI:30616"/>
    </ligand>
</feature>
<sequence length="512" mass="54696">MLLARLAQVSREVAATSARSRKTVLLAELFREAEAADVPVVIPYLAGRLPQGRIGVGWKVLSRRVPPADAPTLTVRDVDARLTRLGAVSGAGSQAERTRLVGELMGAATEDEQRFLIGLLTGEVRQGALDAAAVEGLAAATDAPPADVRRAVMLAGSLQTVAEALLADGPGALDRFRLTVGQPVLPMLAHSASSVAEAVGKLGAAAVEEKLDGIRVQVHRDGGTVRIYTRTLDDITDRLPEVTEAALALPGERFILDGEAISLDADGRPRSFQETAGRVGSRTDVATAARAVPVSAVFFDVLSVDGRDLLDLPLTERHAELARLVPEPLRVRRTLVHGPEDTGAAEEFLARTLARGHEGVVVKGLDAAYSAGRRGASWLKVKPVHTLDLVVLAAEWGHGRRTGKLSNLHLGARTADGSFAMLGKTFKGMTDALLTWQTERLKELAVEEHGWGVTVRPELVVEIAYDGLQRSTRYPAGVTLRFARVVRYREDKRPEDADTVDTLLAAHPGVAP</sequence>
<accession>Q9FCB1</accession>
<keyword id="KW-0067">ATP-binding</keyword>
<keyword id="KW-0131">Cell cycle</keyword>
<keyword id="KW-0132">Cell division</keyword>
<keyword id="KW-0227">DNA damage</keyword>
<keyword id="KW-0233">DNA recombination</keyword>
<keyword id="KW-0234">DNA repair</keyword>
<keyword id="KW-0235">DNA replication</keyword>
<keyword id="KW-0436">Ligase</keyword>
<keyword id="KW-0460">Magnesium</keyword>
<keyword id="KW-0479">Metal-binding</keyword>
<keyword id="KW-0547">Nucleotide-binding</keyword>
<keyword id="KW-1185">Reference proteome</keyword>
<organism>
    <name type="scientific">Streptomyces coelicolor (strain ATCC BAA-471 / A3(2) / M145)</name>
    <dbReference type="NCBI Taxonomy" id="100226"/>
    <lineage>
        <taxon>Bacteria</taxon>
        <taxon>Bacillati</taxon>
        <taxon>Actinomycetota</taxon>
        <taxon>Actinomycetes</taxon>
        <taxon>Kitasatosporales</taxon>
        <taxon>Streptomycetaceae</taxon>
        <taxon>Streptomyces</taxon>
        <taxon>Streptomyces albidoflavus group</taxon>
    </lineage>
</organism>
<name>DNLI_STRCO</name>
<evidence type="ECO:0000255" key="1">
    <source>
        <dbReference type="HAMAP-Rule" id="MF_00407"/>
    </source>
</evidence>
<comment type="function">
    <text evidence="1">DNA ligase that seals nicks in double-stranded DNA during DNA replication, DNA recombination and DNA repair.</text>
</comment>
<comment type="catalytic activity">
    <reaction evidence="1">
        <text>ATP + (deoxyribonucleotide)n-3'-hydroxyl + 5'-phospho-(deoxyribonucleotide)m = (deoxyribonucleotide)n+m + AMP + diphosphate.</text>
        <dbReference type="EC" id="6.5.1.1"/>
    </reaction>
</comment>
<comment type="cofactor">
    <cofactor evidence="1">
        <name>Mg(2+)</name>
        <dbReference type="ChEBI" id="CHEBI:18420"/>
    </cofactor>
</comment>
<comment type="similarity">
    <text evidence="1">Belongs to the ATP-dependent DNA ligase family.</text>
</comment>
<dbReference type="EC" id="6.5.1.1" evidence="1"/>
<dbReference type="EMBL" id="AL939108">
    <property type="protein sequence ID" value="CAC01484.1"/>
    <property type="molecule type" value="Genomic_DNA"/>
</dbReference>
<dbReference type="RefSeq" id="NP_625491.1">
    <property type="nucleotide sequence ID" value="NC_003888.3"/>
</dbReference>
<dbReference type="RefSeq" id="WP_011027650.1">
    <property type="nucleotide sequence ID" value="NZ_VNID01000006.1"/>
</dbReference>
<dbReference type="SMR" id="Q9FCB1"/>
<dbReference type="FunCoup" id="Q9FCB1">
    <property type="interactions" value="213"/>
</dbReference>
<dbReference type="STRING" id="100226.gene:17758785"/>
<dbReference type="PaxDb" id="100226-SCO1202"/>
<dbReference type="KEGG" id="sco:SCO1202"/>
<dbReference type="PATRIC" id="fig|100226.15.peg.1201"/>
<dbReference type="eggNOG" id="COG1793">
    <property type="taxonomic scope" value="Bacteria"/>
</dbReference>
<dbReference type="HOGENOM" id="CLU_005138_6_1_11"/>
<dbReference type="InParanoid" id="Q9FCB1"/>
<dbReference type="OrthoDB" id="3733803at2"/>
<dbReference type="PhylomeDB" id="Q9FCB1"/>
<dbReference type="Proteomes" id="UP000001973">
    <property type="component" value="Chromosome"/>
</dbReference>
<dbReference type="GO" id="GO:0005524">
    <property type="term" value="F:ATP binding"/>
    <property type="evidence" value="ECO:0007669"/>
    <property type="project" value="UniProtKB-UniRule"/>
</dbReference>
<dbReference type="GO" id="GO:0003677">
    <property type="term" value="F:DNA binding"/>
    <property type="evidence" value="ECO:0007669"/>
    <property type="project" value="InterPro"/>
</dbReference>
<dbReference type="GO" id="GO:0003910">
    <property type="term" value="F:DNA ligase (ATP) activity"/>
    <property type="evidence" value="ECO:0000318"/>
    <property type="project" value="GO_Central"/>
</dbReference>
<dbReference type="GO" id="GO:0046872">
    <property type="term" value="F:metal ion binding"/>
    <property type="evidence" value="ECO:0007669"/>
    <property type="project" value="UniProtKB-KW"/>
</dbReference>
<dbReference type="GO" id="GO:0051301">
    <property type="term" value="P:cell division"/>
    <property type="evidence" value="ECO:0007669"/>
    <property type="project" value="UniProtKB-KW"/>
</dbReference>
<dbReference type="GO" id="GO:0071897">
    <property type="term" value="P:DNA biosynthetic process"/>
    <property type="evidence" value="ECO:0007669"/>
    <property type="project" value="InterPro"/>
</dbReference>
<dbReference type="GO" id="GO:0006310">
    <property type="term" value="P:DNA recombination"/>
    <property type="evidence" value="ECO:0007669"/>
    <property type="project" value="UniProtKB-UniRule"/>
</dbReference>
<dbReference type="GO" id="GO:0006281">
    <property type="term" value="P:DNA repair"/>
    <property type="evidence" value="ECO:0007669"/>
    <property type="project" value="UniProtKB-UniRule"/>
</dbReference>
<dbReference type="GO" id="GO:0006260">
    <property type="term" value="P:DNA replication"/>
    <property type="evidence" value="ECO:0007669"/>
    <property type="project" value="UniProtKB-UniRule"/>
</dbReference>
<dbReference type="CDD" id="cd07901">
    <property type="entry name" value="Adenylation_DNA_ligase_Arch_LigB"/>
    <property type="match status" value="1"/>
</dbReference>
<dbReference type="FunFam" id="1.10.3260.10:FF:000009">
    <property type="entry name" value="Probable DNA ligase"/>
    <property type="match status" value="1"/>
</dbReference>
<dbReference type="FunFam" id="2.40.50.140:FF:000163">
    <property type="entry name" value="Probable DNA ligase"/>
    <property type="match status" value="1"/>
</dbReference>
<dbReference type="FunFam" id="3.30.470.30:FF:000012">
    <property type="entry name" value="Probable DNA ligase"/>
    <property type="match status" value="1"/>
</dbReference>
<dbReference type="Gene3D" id="1.10.3260.10">
    <property type="entry name" value="DNA ligase, ATP-dependent, N-terminal domain"/>
    <property type="match status" value="1"/>
</dbReference>
<dbReference type="Gene3D" id="3.30.470.30">
    <property type="entry name" value="DNA ligase/mRNA capping enzyme"/>
    <property type="match status" value="1"/>
</dbReference>
<dbReference type="Gene3D" id="2.40.50.140">
    <property type="entry name" value="Nucleic acid-binding proteins"/>
    <property type="match status" value="1"/>
</dbReference>
<dbReference type="HAMAP" id="MF_00407">
    <property type="entry name" value="DNA_ligase"/>
    <property type="match status" value="1"/>
</dbReference>
<dbReference type="InterPro" id="IPR050191">
    <property type="entry name" value="ATP-dep_DNA_ligase"/>
</dbReference>
<dbReference type="InterPro" id="IPR022865">
    <property type="entry name" value="DNA_ligae_ATP-dep_bac/arc"/>
</dbReference>
<dbReference type="InterPro" id="IPR000977">
    <property type="entry name" value="DNA_ligase_ATP-dep"/>
</dbReference>
<dbReference type="InterPro" id="IPR012309">
    <property type="entry name" value="DNA_ligase_ATP-dep_C"/>
</dbReference>
<dbReference type="InterPro" id="IPR012310">
    <property type="entry name" value="DNA_ligase_ATP-dep_cent"/>
</dbReference>
<dbReference type="InterPro" id="IPR016059">
    <property type="entry name" value="DNA_ligase_ATP-dep_CS"/>
</dbReference>
<dbReference type="InterPro" id="IPR012308">
    <property type="entry name" value="DNA_ligase_ATP-dep_N"/>
</dbReference>
<dbReference type="InterPro" id="IPR036599">
    <property type="entry name" value="DNA_ligase_N_sf"/>
</dbReference>
<dbReference type="InterPro" id="IPR012340">
    <property type="entry name" value="NA-bd_OB-fold"/>
</dbReference>
<dbReference type="NCBIfam" id="TIGR00574">
    <property type="entry name" value="dnl1"/>
    <property type="match status" value="1"/>
</dbReference>
<dbReference type="NCBIfam" id="NF002868">
    <property type="entry name" value="PRK03180.1"/>
    <property type="match status" value="1"/>
</dbReference>
<dbReference type="PANTHER" id="PTHR45674">
    <property type="entry name" value="DNA LIGASE 1/3 FAMILY MEMBER"/>
    <property type="match status" value="1"/>
</dbReference>
<dbReference type="PANTHER" id="PTHR45674:SF13">
    <property type="entry name" value="DNA LIGASE-RELATED"/>
    <property type="match status" value="1"/>
</dbReference>
<dbReference type="Pfam" id="PF04679">
    <property type="entry name" value="DNA_ligase_A_C"/>
    <property type="match status" value="1"/>
</dbReference>
<dbReference type="Pfam" id="PF01068">
    <property type="entry name" value="DNA_ligase_A_M"/>
    <property type="match status" value="1"/>
</dbReference>
<dbReference type="Pfam" id="PF04675">
    <property type="entry name" value="DNA_ligase_A_N"/>
    <property type="match status" value="1"/>
</dbReference>
<dbReference type="SUPFAM" id="SSF117018">
    <property type="entry name" value="ATP-dependent DNA ligase DNA-binding domain"/>
    <property type="match status" value="1"/>
</dbReference>
<dbReference type="SUPFAM" id="SSF56091">
    <property type="entry name" value="DNA ligase/mRNA capping enzyme, catalytic domain"/>
    <property type="match status" value="1"/>
</dbReference>
<dbReference type="SUPFAM" id="SSF50249">
    <property type="entry name" value="Nucleic acid-binding proteins"/>
    <property type="match status" value="1"/>
</dbReference>
<dbReference type="PROSITE" id="PS00697">
    <property type="entry name" value="DNA_LIGASE_A1"/>
    <property type="match status" value="1"/>
</dbReference>
<dbReference type="PROSITE" id="PS50160">
    <property type="entry name" value="DNA_LIGASE_A3"/>
    <property type="match status" value="1"/>
</dbReference>
<proteinExistence type="inferred from homology"/>